<reference key="1">
    <citation type="journal article" date="2009" name="PLoS Genet.">
        <title>Organised genome dynamics in the Escherichia coli species results in highly diverse adaptive paths.</title>
        <authorList>
            <person name="Touchon M."/>
            <person name="Hoede C."/>
            <person name="Tenaillon O."/>
            <person name="Barbe V."/>
            <person name="Baeriswyl S."/>
            <person name="Bidet P."/>
            <person name="Bingen E."/>
            <person name="Bonacorsi S."/>
            <person name="Bouchier C."/>
            <person name="Bouvet O."/>
            <person name="Calteau A."/>
            <person name="Chiapello H."/>
            <person name="Clermont O."/>
            <person name="Cruveiller S."/>
            <person name="Danchin A."/>
            <person name="Diard M."/>
            <person name="Dossat C."/>
            <person name="Karoui M.E."/>
            <person name="Frapy E."/>
            <person name="Garry L."/>
            <person name="Ghigo J.M."/>
            <person name="Gilles A.M."/>
            <person name="Johnson J."/>
            <person name="Le Bouguenec C."/>
            <person name="Lescat M."/>
            <person name="Mangenot S."/>
            <person name="Martinez-Jehanne V."/>
            <person name="Matic I."/>
            <person name="Nassif X."/>
            <person name="Oztas S."/>
            <person name="Petit M.A."/>
            <person name="Pichon C."/>
            <person name="Rouy Z."/>
            <person name="Ruf C.S."/>
            <person name="Schneider D."/>
            <person name="Tourret J."/>
            <person name="Vacherie B."/>
            <person name="Vallenet D."/>
            <person name="Medigue C."/>
            <person name="Rocha E.P.C."/>
            <person name="Denamur E."/>
        </authorList>
    </citation>
    <scope>NUCLEOTIDE SEQUENCE [LARGE SCALE GENOMIC DNA]</scope>
    <source>
        <strain>S88 / ExPEC</strain>
    </source>
</reference>
<feature type="chain" id="PRO_1000194514" description="Ion-translocating oxidoreductase complex subunit C">
    <location>
        <begin position="1"/>
        <end position="708"/>
    </location>
</feature>
<feature type="domain" description="4Fe-4S ferredoxin-type 1" evidence="1">
    <location>
        <begin position="369"/>
        <end position="397"/>
    </location>
</feature>
<feature type="domain" description="4Fe-4S ferredoxin-type 2" evidence="1">
    <location>
        <begin position="407"/>
        <end position="436"/>
    </location>
</feature>
<feature type="region of interest" description="Disordered" evidence="2">
    <location>
        <begin position="630"/>
        <end position="682"/>
    </location>
</feature>
<feature type="binding site" evidence="1">
    <location>
        <position position="377"/>
    </location>
    <ligand>
        <name>[4Fe-4S] cluster</name>
        <dbReference type="ChEBI" id="CHEBI:49883"/>
        <label>1</label>
    </ligand>
</feature>
<feature type="binding site" evidence="1">
    <location>
        <position position="380"/>
    </location>
    <ligand>
        <name>[4Fe-4S] cluster</name>
        <dbReference type="ChEBI" id="CHEBI:49883"/>
        <label>1</label>
    </ligand>
</feature>
<feature type="binding site" evidence="1">
    <location>
        <position position="383"/>
    </location>
    <ligand>
        <name>[4Fe-4S] cluster</name>
        <dbReference type="ChEBI" id="CHEBI:49883"/>
        <label>1</label>
    </ligand>
</feature>
<feature type="binding site" evidence="1">
    <location>
        <position position="387"/>
    </location>
    <ligand>
        <name>[4Fe-4S] cluster</name>
        <dbReference type="ChEBI" id="CHEBI:49883"/>
        <label>2</label>
    </ligand>
</feature>
<feature type="binding site" evidence="1">
    <location>
        <position position="416"/>
    </location>
    <ligand>
        <name>[4Fe-4S] cluster</name>
        <dbReference type="ChEBI" id="CHEBI:49883"/>
        <label>2</label>
    </ligand>
</feature>
<feature type="binding site" evidence="1">
    <location>
        <position position="419"/>
    </location>
    <ligand>
        <name>[4Fe-4S] cluster</name>
        <dbReference type="ChEBI" id="CHEBI:49883"/>
        <label>2</label>
    </ligand>
</feature>
<feature type="binding site" evidence="1">
    <location>
        <position position="422"/>
    </location>
    <ligand>
        <name>[4Fe-4S] cluster</name>
        <dbReference type="ChEBI" id="CHEBI:49883"/>
        <label>2</label>
    </ligand>
</feature>
<feature type="binding site" evidence="1">
    <location>
        <position position="426"/>
    </location>
    <ligand>
        <name>[4Fe-4S] cluster</name>
        <dbReference type="ChEBI" id="CHEBI:49883"/>
        <label>1</label>
    </ligand>
</feature>
<gene>
    <name evidence="1" type="primary">rsxC</name>
    <name type="ordered locus">ECS88_1677</name>
</gene>
<dbReference type="EC" id="7.-.-.-" evidence="1"/>
<dbReference type="EMBL" id="CU928161">
    <property type="protein sequence ID" value="CAR02990.1"/>
    <property type="molecule type" value="Genomic_DNA"/>
</dbReference>
<dbReference type="RefSeq" id="WP_000915721.1">
    <property type="nucleotide sequence ID" value="NC_011742.1"/>
</dbReference>
<dbReference type="SMR" id="B7M9Y3"/>
<dbReference type="KEGG" id="ecz:ECS88_1677"/>
<dbReference type="HOGENOM" id="CLU_010808_2_1_6"/>
<dbReference type="Proteomes" id="UP000000747">
    <property type="component" value="Chromosome"/>
</dbReference>
<dbReference type="GO" id="GO:0005886">
    <property type="term" value="C:plasma membrane"/>
    <property type="evidence" value="ECO:0007669"/>
    <property type="project" value="UniProtKB-SubCell"/>
</dbReference>
<dbReference type="GO" id="GO:0051539">
    <property type="term" value="F:4 iron, 4 sulfur cluster binding"/>
    <property type="evidence" value="ECO:0007669"/>
    <property type="project" value="UniProtKB-KW"/>
</dbReference>
<dbReference type="GO" id="GO:0009055">
    <property type="term" value="F:electron transfer activity"/>
    <property type="evidence" value="ECO:0007669"/>
    <property type="project" value="InterPro"/>
</dbReference>
<dbReference type="GO" id="GO:0046872">
    <property type="term" value="F:metal ion binding"/>
    <property type="evidence" value="ECO:0007669"/>
    <property type="project" value="UniProtKB-KW"/>
</dbReference>
<dbReference type="GO" id="GO:0022900">
    <property type="term" value="P:electron transport chain"/>
    <property type="evidence" value="ECO:0007669"/>
    <property type="project" value="UniProtKB-UniRule"/>
</dbReference>
<dbReference type="Gene3D" id="3.30.70.20">
    <property type="match status" value="1"/>
</dbReference>
<dbReference type="Gene3D" id="3.40.50.11540">
    <property type="entry name" value="NADH-ubiquinone oxidoreductase 51kDa subunit"/>
    <property type="match status" value="1"/>
</dbReference>
<dbReference type="HAMAP" id="MF_00461">
    <property type="entry name" value="RsxC_RnfC"/>
    <property type="match status" value="1"/>
</dbReference>
<dbReference type="InterPro" id="IPR017896">
    <property type="entry name" value="4Fe4S_Fe-S-bd"/>
</dbReference>
<dbReference type="InterPro" id="IPR017900">
    <property type="entry name" value="4Fe4S_Fe_S_CS"/>
</dbReference>
<dbReference type="InterPro" id="IPR010208">
    <property type="entry name" value="Ion_transpt_RnfC/RsxC"/>
</dbReference>
<dbReference type="InterPro" id="IPR011538">
    <property type="entry name" value="Nuo51_FMN-bd"/>
</dbReference>
<dbReference type="InterPro" id="IPR037225">
    <property type="entry name" value="Nuo51_FMN-bd_sf"/>
</dbReference>
<dbReference type="InterPro" id="IPR026902">
    <property type="entry name" value="RnfC_N"/>
</dbReference>
<dbReference type="InterPro" id="IPR019554">
    <property type="entry name" value="Soluble_ligand-bd"/>
</dbReference>
<dbReference type="NCBIfam" id="NF003454">
    <property type="entry name" value="PRK05035.1"/>
    <property type="match status" value="1"/>
</dbReference>
<dbReference type="NCBIfam" id="TIGR01945">
    <property type="entry name" value="rnfC"/>
    <property type="match status" value="1"/>
</dbReference>
<dbReference type="PANTHER" id="PTHR43034">
    <property type="entry name" value="ION-TRANSLOCATING OXIDOREDUCTASE COMPLEX SUBUNIT C"/>
    <property type="match status" value="1"/>
</dbReference>
<dbReference type="PANTHER" id="PTHR43034:SF2">
    <property type="entry name" value="ION-TRANSLOCATING OXIDOREDUCTASE COMPLEX SUBUNIT C"/>
    <property type="match status" value="1"/>
</dbReference>
<dbReference type="Pfam" id="PF01512">
    <property type="entry name" value="Complex1_51K"/>
    <property type="match status" value="1"/>
</dbReference>
<dbReference type="Pfam" id="PF12838">
    <property type="entry name" value="Fer4_7"/>
    <property type="match status" value="1"/>
</dbReference>
<dbReference type="Pfam" id="PF13375">
    <property type="entry name" value="RnfC_N"/>
    <property type="match status" value="1"/>
</dbReference>
<dbReference type="Pfam" id="PF10531">
    <property type="entry name" value="SLBB"/>
    <property type="match status" value="1"/>
</dbReference>
<dbReference type="SUPFAM" id="SSF46548">
    <property type="entry name" value="alpha-helical ferredoxin"/>
    <property type="match status" value="1"/>
</dbReference>
<dbReference type="SUPFAM" id="SSF142019">
    <property type="entry name" value="Nqo1 FMN-binding domain-like"/>
    <property type="match status" value="1"/>
</dbReference>
<dbReference type="PROSITE" id="PS00198">
    <property type="entry name" value="4FE4S_FER_1"/>
    <property type="match status" value="2"/>
</dbReference>
<dbReference type="PROSITE" id="PS51379">
    <property type="entry name" value="4FE4S_FER_2"/>
    <property type="match status" value="2"/>
</dbReference>
<keyword id="KW-0004">4Fe-4S</keyword>
<keyword id="KW-0997">Cell inner membrane</keyword>
<keyword id="KW-1003">Cell membrane</keyword>
<keyword id="KW-0249">Electron transport</keyword>
<keyword id="KW-0408">Iron</keyword>
<keyword id="KW-0411">Iron-sulfur</keyword>
<keyword id="KW-0472">Membrane</keyword>
<keyword id="KW-0479">Metal-binding</keyword>
<keyword id="KW-1185">Reference proteome</keyword>
<keyword id="KW-0677">Repeat</keyword>
<keyword id="KW-1278">Translocase</keyword>
<keyword id="KW-0813">Transport</keyword>
<organism>
    <name type="scientific">Escherichia coli O45:K1 (strain S88 / ExPEC)</name>
    <dbReference type="NCBI Taxonomy" id="585035"/>
    <lineage>
        <taxon>Bacteria</taxon>
        <taxon>Pseudomonadati</taxon>
        <taxon>Pseudomonadota</taxon>
        <taxon>Gammaproteobacteria</taxon>
        <taxon>Enterobacterales</taxon>
        <taxon>Enterobacteriaceae</taxon>
        <taxon>Escherichia</taxon>
    </lineage>
</organism>
<comment type="function">
    <text evidence="1">Part of a membrane-bound complex that couples electron transfer with translocation of ions across the membrane. Required to maintain the reduced state of SoxR.</text>
</comment>
<comment type="cofactor">
    <cofactor evidence="1">
        <name>[4Fe-4S] cluster</name>
        <dbReference type="ChEBI" id="CHEBI:49883"/>
    </cofactor>
    <text evidence="1">Binds 2 [4Fe-4S] clusters per subunit.</text>
</comment>
<comment type="subunit">
    <text evidence="1">The complex is composed of six subunits: RsxA, RsxB, RsxC, RsxD, RsxE and RsxG.</text>
</comment>
<comment type="subcellular location">
    <subcellularLocation>
        <location evidence="1">Cell inner membrane</location>
        <topology evidence="1">Peripheral membrane protein</topology>
    </subcellularLocation>
</comment>
<comment type="similarity">
    <text evidence="1">Belongs to the 4Fe4S bacterial-type ferredoxin family. RnfC subfamily.</text>
</comment>
<evidence type="ECO:0000255" key="1">
    <source>
        <dbReference type="HAMAP-Rule" id="MF_00461"/>
    </source>
</evidence>
<evidence type="ECO:0000256" key="2">
    <source>
        <dbReference type="SAM" id="MobiDB-lite"/>
    </source>
</evidence>
<accession>B7M9Y3</accession>
<sequence>MLKLFSAFRKNKIWDFNGGIHPPEMKTQSNGTPLRQVPLAQRFVIPLKQHIGAEGELCVSVGDKVLRGQPLTRGRGKMLPVHAPTSGTVTAIAPHSTAHPSALAELSVIIDADGEDCWIPRDGWADYRSRSREELIERIHQFGVAGLGGAGFPTGVKLQGGGDKIETLIINAAECEPYITADDRLMQDCAAQVVEGIRILAHILQPREILIGIEDNKPQAISMLRAVLADSHDISLRVIPTKYPSGGAKQLTYILTGKQVPHGGRSSDIGVLMQNVGTAYAVKRAVIDGEPITERVVTLTGEAIARPGNVWARLGTPVRHLLNDAGFCPSADQMVIMGGPLMGFTLPWLDVPVVKITNCLLAPSANELGEPQEEQSCIRCSACADACPADLLPQQLYWFSKGQQHDKATTHNIADCIECGACAWVCPSNIPLVQYFRQEKAEIAAIRQEEKRAAEAKARFEARQARLEREKAARLERHKSAAVQPAAKDKDAIAAALARVKEKQAQATQPIVIKAGERPDNSAIIAAREARKAQARAKQAELQQTNDAATVADPRKTAVEAAIARAKARKLEQQQANAEPEEQIDPRKAAVEAAIARAKARKLEQQQANAEPEEQIDPRKAAVEAAIARAKARKLEQQQANAEPEEQIDPRKAAVEAAIARAKARKLEQQQANAEPEEQIDPRKAAVAAAIARVQAKKAAQQKVVNED</sequence>
<proteinExistence type="inferred from homology"/>
<protein>
    <recommendedName>
        <fullName evidence="1">Ion-translocating oxidoreductase complex subunit C</fullName>
        <ecNumber evidence="1">7.-.-.-</ecNumber>
    </recommendedName>
    <alternativeName>
        <fullName evidence="1">Rsx electron transport complex subunit C</fullName>
    </alternativeName>
</protein>
<name>RSXC_ECO45</name>